<gene>
    <name evidence="14" type="primary">Casp6</name>
    <name evidence="11" type="synonym">Mch2</name>
</gene>
<name>CASP6_MOUSE</name>
<keyword id="KW-0053">Apoptosis</keyword>
<keyword id="KW-0068">Autocatalytic cleavage</keyword>
<keyword id="KW-0963">Cytoplasm</keyword>
<keyword id="KW-0378">Hydrolase</keyword>
<keyword id="KW-0449">Lipoprotein</keyword>
<keyword id="KW-0539">Nucleus</keyword>
<keyword id="KW-0564">Palmitate</keyword>
<keyword id="KW-0597">Phosphoprotein</keyword>
<keyword id="KW-0645">Protease</keyword>
<keyword id="KW-1185">Reference proteome</keyword>
<keyword id="KW-0788">Thiol protease</keyword>
<keyword id="KW-0865">Zymogen</keyword>
<comment type="function">
    <text evidence="1 3 4 5 6 7 8 9">Cysteine protease that plays essential roles in programmed cell death, axonal degeneration, development and innate immunity (PubMed:18981099, PubMed:22555455, PubMed:23695670, PubMed:32298652). Acts as a non-canonical executioner caspase during apoptosis: localizes in the nucleus and cleaves the nuclear structural protein NUMA1 and lamin A/LMNA thereby inducing nuclear shrinkage and fragmentation (By similarity). Lamin-A/LMNA cleavage is required for chromatin condensation and nuclear disassembly during apoptotic execution (By similarity). Acts as a regulator of liver damage by promoting hepatocyte apoptosis: in absence of phosphorylation by AMP-activated protein kinase (AMPK), catalyzes cleavage of BID, leading to cytochrome c release, thereby participating in nonalcoholic steatohepatitis (PubMed:32029622). Cleaves PARK7/DJ-1 in cells undergoing apoptosis (PubMed:22555455). Involved in intrinsic apoptosis by mediating cleavage of RIPK1 (By similarity). Furthermore, cleaves many transcription factors such as NF-kappa-B and cAMP response element-binding protein/CREBBP (By similarity). Cleaves phospholipid scramblase proteins XKR4 and XKR9 (PubMed:25231987). In addition to apoptosis, involved in different forms of programmed cell death (PubMed:32298652). Plays an essential role in defense against viruses by acting as a central mediator of the ZBP1-mediated pyroptosis, apoptosis, and necroptosis (PANoptosis), independently of its cysteine protease activity (PubMed:32298652). PANoptosis is a unique inflammatory programmed cell death, which provides a molecular scaffold that allows the interactions and activation of machinery required for inflammasome/pyroptosis, apoptosis and necroptosis (PubMed:32298652). Mechanistically, interacts with RIPK3 and enhances the interaction between RIPK3 and ZBP1, leading to ZBP1-mediated inflammasome activation and cell death (PubMed:32298652). Plays an essential role in axon degeneration during axon pruning which is the remodeling of axons during neurogenesis but not apoptosis (PubMed:23695670). Regulates B-cell programs both during early development and after antigen stimulation (PubMed:18981099, PubMed:29863787).</text>
</comment>
<comment type="function">
    <text evidence="10">(Microbial infection) Proteolytically cleaves the N protein of coronaviruses. The cleavage leads to two fragments and modulates coronavirus replication by regulating IFN signaling. The two fragments produced by the cleavage interact with IRF3 inhibiting its nuclear translocation after activation and reduce the expression of IFNB and IFN-stimulated genes.</text>
</comment>
<comment type="catalytic activity">
    <reaction evidence="4 6">
        <text>Strict requirement for Asp at position P1 and has a preferred cleavage sequence of Val-Glu-His-Asp-|-.</text>
        <dbReference type="EC" id="3.4.22.59"/>
    </reaction>
</comment>
<comment type="activity regulation">
    <text evidence="1">During activation, the N-terminal disordered prodomain is removed by cleavage. Concomitantly, double cleavage gives rise to a large 18-kDa and a small 11-kDa subunit. The two large and two small subunits then assemble to form the active CASP6 complex. Can be cleaved and activated by different caspases, depending on the context. Cleaved and activated by caspase-8 (CASP8) and subsequently by caspase-3 (CASP3). Can also undergo autoactivation by mediating autocleavage at Asp-162 and Asp-175, while it is not able to cleave its N-terminal disordered prodomain. Intramolecular cleavage at Asp-175 is a prerequisite for CASP6 self-activation. Cleaved and activated by CASP1 in neurons, possibly in the context of inflammation. Phosphorylation at Ser-239 inhibits autocleavage, preventing caspase activation.</text>
</comment>
<comment type="subunit">
    <text evidence="1">Heterotetramer that consists of two anti-parallel arranged heterodimers, each one formed by a 18 kDa (p18) and a 11 kDa (p11) subunit. Interacts with BIRC6/bruce. Interacts with RIPK3.</text>
</comment>
<comment type="subunit">
    <molecule>Caspase-6 subunit p18</molecule>
    <text evidence="1">Heterotetramer that consists of two anti-parallel arranged heterodimers, each one formed by a 18 kDa (Caspase-6 subunit p18) and a 11 kDa (Caspase-6 subunit p11) subunit.</text>
</comment>
<comment type="subunit">
    <molecule>Caspase-6 subunit p11</molecule>
    <text evidence="1">Heterotetramer that consists of two anti-parallel arranged heterodimers, each one formed by a 18 kDa (Caspase-6 subunit p18) and a 11 kDa (Caspase-6 subunit p11) subunit.</text>
</comment>
<comment type="subcellular location">
    <subcellularLocation>
        <location evidence="1">Cytoplasm</location>
    </subcellularLocation>
    <subcellularLocation>
        <location evidence="1">Nucleus</location>
    </subcellularLocation>
</comment>
<comment type="tissue specificity">
    <text evidence="5">Highly expressed in lung, liver, kidney, testis, and heart. Lower levels in spleen, skeletal muscle and brain. Expressed in neurons.</text>
</comment>
<comment type="domain">
    <text evidence="1">The N-terminal disordered prodomain is required to prevent self-activation.</text>
</comment>
<comment type="domain">
    <text evidence="1">The Tri-arginine exosite is required to recruit substrates for hydrolysis.</text>
</comment>
<comment type="domain">
    <text evidence="1">Undergoes helix-strand structural transitions upon substrate-binding: the 130's region interconverts between an inactive helical state and the canonically active strand state. Other caspases rest constitutively in the strand conformation before and after substrate-binding.</text>
</comment>
<comment type="PTM">
    <text evidence="1">Phosphorylated by NUAK1; phosphorylation inhibits self-activation. Phosphorylation at Ser-239 by AMP-activated protein kinase (PRKAA1 or PRKAA2) inhibits autocleavage, preventing caspase activation, thereby preventing hepatocyte apoptosis.</text>
</comment>
<comment type="PTM">
    <text evidence="1">Palmitoylation by ZDHHC17 blocks dimerization and subsequent activation, leading to inhibit the cysteine protease activity.</text>
</comment>
<comment type="PTM">
    <text evidence="1">Can be cleaved and activated by different caspases, depending on the context. Cleaved and activated by caspase-8 (CASP8) and subsequently by caspase-3 (CASP3). Can also undergo autoactivation by mediating autocleavage at Asp-162 and Asp-175, while it is not able to cleave its N-terminal disordered prodomain. Cleaved and activated by CASP1, possibly in the context of inflammation.</text>
</comment>
<comment type="disruption phenotype">
    <text evidence="2 3 5 7 9">Casp6-knockout mice are grossly normal, breed with Mendelian ratio, and are only slightly protected from anti-Fas/CD95-induced cell death (PubMed:11062535). Casp6-deficient neurons undergo apoptosis and exhibit soma and axon degeneration just as wild type neurons (PubMed:23695670). While Casp6-deficiency is able to block axon degeneration with local deprivation, it is incapable of doing so with global deprivation (PubMed:23695670). In addition, B-cell differentiation into plasma cells is accelerated in deletion mutants compared to wild-type (PubMed:18981099, PubMed:29863787). Casp6-knockout mice are more susceptible to influenza virus infection (PubMed:32298652).</text>
</comment>
<comment type="similarity">
    <text evidence="12">Belongs to the peptidase C14A family.</text>
</comment>
<reference key="1">
    <citation type="journal article" date="1997" name="FEBS Lett.">
        <title>Characterization of seven murine caspase family members.</title>
        <authorList>
            <person name="van de Craen M."/>
            <person name="Vandenabeele P."/>
            <person name="Declercq W."/>
            <person name="van den Brande I."/>
            <person name="van Loo G."/>
            <person name="Molemans F."/>
            <person name="Schotte P."/>
            <person name="van Criekinge W."/>
            <person name="Beyaert R."/>
            <person name="Fiers W."/>
        </authorList>
    </citation>
    <scope>NUCLEOTIDE SEQUENCE [MRNA]</scope>
    <source>
        <strain>C3H/An</strain>
    </source>
</reference>
<reference key="2">
    <citation type="journal article" date="2000" name="Nat. Med.">
        <title>Deficiency in caspase-9 or caspase-3 induces compensatory caspase activation.</title>
        <authorList>
            <person name="Zheng T.S."/>
            <person name="Hunot S."/>
            <person name="Kuida K."/>
            <person name="Momoi T."/>
            <person name="Srinivasan A."/>
            <person name="Nicholson D.W."/>
            <person name="Lazebnik Y."/>
            <person name="Flavell R.A."/>
        </authorList>
    </citation>
    <scope>DISRUPTION PHENOTYPE</scope>
</reference>
<reference key="3">
    <citation type="journal article" date="2008" name="J. Immunol.">
        <title>Caspase 6 regulates B cell activation and differentiation into plasma cells.</title>
        <authorList>
            <person name="Watanabe C."/>
            <person name="Shu G.L."/>
            <person name="Zheng T.S."/>
            <person name="Flavell R.A."/>
            <person name="Clark E.A."/>
        </authorList>
    </citation>
    <scope>FUNCTION</scope>
    <scope>DISRUPTION PHENOTYPE</scope>
</reference>
<reference key="4">
    <citation type="journal article" date="2010" name="Cell">
        <title>A tissue-specific atlas of mouse protein phosphorylation and expression.</title>
        <authorList>
            <person name="Huttlin E.L."/>
            <person name="Jedrychowski M.P."/>
            <person name="Elias J.E."/>
            <person name="Goswami T."/>
            <person name="Rad R."/>
            <person name="Beausoleil S.A."/>
            <person name="Villen J."/>
            <person name="Haas W."/>
            <person name="Sowa M.E."/>
            <person name="Gygi S.P."/>
        </authorList>
    </citation>
    <scope>PHOSPHORYLATION [LARGE SCALE ANALYSIS] AT SER-62</scope>
    <scope>IDENTIFICATION BY MASS SPECTROMETRY [LARGE SCALE ANALYSIS]</scope>
    <source>
        <tissue>Brown adipose tissue</tissue>
        <tissue>Heart</tissue>
        <tissue>Kidney</tissue>
        <tissue>Liver</tissue>
        <tissue>Lung</tissue>
        <tissue>Spleen</tissue>
        <tissue>Testis</tissue>
    </source>
</reference>
<reference key="5">
    <citation type="journal article" date="2012" name="Cell Death Differ.">
        <title>The caspase 6 derived N-terminal fragment of DJ-1 promotes apoptosis via increased ROS production.</title>
        <authorList>
            <person name="Robert G."/>
            <person name="Puissant A."/>
            <person name="Dufies M."/>
            <person name="Marchetti S."/>
            <person name="Jacquel A."/>
            <person name="Cluzeau T."/>
            <person name="Colosetti P."/>
            <person name="Belhacene N."/>
            <person name="Kahle P."/>
            <person name="Da Costa C.A."/>
            <person name="Luciano F."/>
            <person name="Checler F."/>
            <person name="Auberger P."/>
        </authorList>
    </citation>
    <scope>FUNCTION</scope>
    <scope>CATALYTIC ACTIVITY</scope>
</reference>
<reference key="6">
    <citation type="journal article" date="2013" name="Nat. Commun.">
        <title>Distinct pathways mediate axon degeneration during apoptosis and axon-specific pruning.</title>
        <authorList>
            <person name="Cusack C.L."/>
            <person name="Swahari V."/>
            <person name="Hampton Henley W."/>
            <person name="Michael Ramsey J."/>
            <person name="Deshmukh M."/>
        </authorList>
    </citation>
    <scope>FUNCTION</scope>
    <scope>TISSUE SPECIFICITY</scope>
    <scope>DISRUPTION PHENOTYPE</scope>
</reference>
<reference key="7">
    <citation type="journal article" date="2014" name="J. Biol. Chem.">
        <title>Exposure of phosphatidylserine by Xk-related protein family members during apoptosis.</title>
        <authorList>
            <person name="Suzuki J."/>
            <person name="Imanishi E."/>
            <person name="Nagata S."/>
        </authorList>
    </citation>
    <scope>FUNCTION</scope>
    <scope>CATALYTIC ACTIVITY</scope>
</reference>
<reference key="8">
    <citation type="journal article" date="2018" name="Immunol. Cell Biol.">
        <title>Regulation of B-lineage cells by caspase 6.</title>
        <authorList>
            <person name="Watanabe C."/>
            <person name="Shu G.L."/>
            <person name="Giltiay N.V."/>
            <person name="Clark E.A."/>
        </authorList>
    </citation>
    <scope>FUNCTION</scope>
    <scope>DISRUPTION PHENOTYPE</scope>
</reference>
<reference key="9">
    <citation type="journal article" date="2020" name="Cell">
        <title>Caspase-6 is a key regulator of innate immunity, inflammasome activation, and host defense.</title>
        <authorList>
            <person name="Zheng M."/>
            <person name="Karki R."/>
            <person name="Vogel P."/>
            <person name="Kanneganti T.D."/>
        </authorList>
    </citation>
    <scope>FUNCTION</scope>
    <scope>INTERACTION WITH RIPK3</scope>
    <scope>ACTIVE SITE</scope>
    <scope>MUTAGENESIS OF CYS-146</scope>
</reference>
<reference key="10">
    <citation type="journal article" date="2020" name="Science">
        <title>An AMPK-caspase-6 axis controls liver damage in nonalcoholic steatohepatitis.</title>
        <authorList>
            <person name="Zhao P."/>
            <person name="Sun X."/>
            <person name="Chaggan C."/>
            <person name="Liao Z."/>
            <person name="In Wong K."/>
            <person name="He F."/>
            <person name="Singh S."/>
            <person name="Loomba R."/>
            <person name="Karin M."/>
            <person name="Witztum J.L."/>
            <person name="Saltiel A.R."/>
        </authorList>
    </citation>
    <scope>FUNCTION</scope>
</reference>
<reference key="11">
    <citation type="journal article" date="2022" name="Nature">
        <title>Coronaviruses exploit a host cysteine-aspartic protease for replication.</title>
        <authorList>
            <person name="Chu H."/>
            <person name="Hou Y."/>
            <person name="Yang D."/>
            <person name="Wen L."/>
            <person name="Shuai H."/>
            <person name="Yoon C."/>
            <person name="Shi J."/>
            <person name="Chai Y."/>
            <person name="Yuen T.T."/>
            <person name="Hu B."/>
            <person name="Li C."/>
            <person name="Zhao X."/>
            <person name="Wang Y."/>
            <person name="Huang X."/>
            <person name="Lee K.S."/>
            <person name="Luo C."/>
            <person name="Cai J.P."/>
            <person name="Poon V.K."/>
            <person name="Chan C.C."/>
            <person name="Zhang A.J."/>
            <person name="Yuan S."/>
            <person name="Sit K.Y."/>
            <person name="Foo D.C."/>
            <person name="Au W.K."/>
            <person name="Wong K.K."/>
            <person name="Zhou J."/>
            <person name="Kok K.H."/>
            <person name="Jin D.Y."/>
            <person name="Chan J.F."/>
            <person name="Yuen K.Y."/>
        </authorList>
    </citation>
    <scope>FUNCTION (MICROBIAL INFECTION)</scope>
</reference>
<dbReference type="EC" id="3.4.22.59" evidence="4 6"/>
<dbReference type="EMBL" id="Y13087">
    <property type="protein sequence ID" value="CAA73529.1"/>
    <property type="molecule type" value="mRNA"/>
</dbReference>
<dbReference type="CCDS" id="CCDS17838.1"/>
<dbReference type="RefSeq" id="NP_033941.3">
    <property type="nucleotide sequence ID" value="NM_009811.4"/>
</dbReference>
<dbReference type="SMR" id="O08738"/>
<dbReference type="BioGRID" id="198498">
    <property type="interactions" value="13"/>
</dbReference>
<dbReference type="ComplexPortal" id="CPX-3944">
    <property type="entry name" value="Caspase-6 complex"/>
</dbReference>
<dbReference type="FunCoup" id="O08738">
    <property type="interactions" value="859"/>
</dbReference>
<dbReference type="STRING" id="10090.ENSMUSP00000029626"/>
<dbReference type="MEROPS" id="C14.005"/>
<dbReference type="iPTMnet" id="O08738"/>
<dbReference type="PhosphoSitePlus" id="O08738"/>
<dbReference type="SwissPalm" id="O08738"/>
<dbReference type="jPOST" id="O08738"/>
<dbReference type="PaxDb" id="10090-ENSMUSP00000029626"/>
<dbReference type="PeptideAtlas" id="O08738"/>
<dbReference type="ProteomicsDB" id="265440"/>
<dbReference type="Pumba" id="O08738"/>
<dbReference type="Antibodypedia" id="1733">
    <property type="antibodies" value="1116 antibodies from 42 providers"/>
</dbReference>
<dbReference type="DNASU" id="12368"/>
<dbReference type="Ensembl" id="ENSMUST00000029626.9">
    <property type="protein sequence ID" value="ENSMUSP00000029626.9"/>
    <property type="gene ID" value="ENSMUSG00000027997.10"/>
</dbReference>
<dbReference type="GeneID" id="12368"/>
<dbReference type="KEGG" id="mmu:12368"/>
<dbReference type="UCSC" id="uc008riq.3">
    <property type="organism name" value="mouse"/>
</dbReference>
<dbReference type="AGR" id="MGI:1312921"/>
<dbReference type="CTD" id="839"/>
<dbReference type="MGI" id="MGI:1312921">
    <property type="gene designation" value="Casp6"/>
</dbReference>
<dbReference type="VEuPathDB" id="HostDB:ENSMUSG00000027997"/>
<dbReference type="eggNOG" id="KOG3573">
    <property type="taxonomic scope" value="Eukaryota"/>
</dbReference>
<dbReference type="GeneTree" id="ENSGT00940000155140"/>
<dbReference type="HOGENOM" id="CLU_036904_2_0_1"/>
<dbReference type="InParanoid" id="O08738"/>
<dbReference type="OMA" id="CEMIRKH"/>
<dbReference type="OrthoDB" id="6116485at2759"/>
<dbReference type="PhylomeDB" id="O08738"/>
<dbReference type="TreeFam" id="TF102023"/>
<dbReference type="BRENDA" id="3.4.22.59">
    <property type="organism ID" value="3474"/>
</dbReference>
<dbReference type="Reactome" id="R-MMU-111465">
    <property type="pathway name" value="Apoptotic cleavage of cellular proteins"/>
</dbReference>
<dbReference type="Reactome" id="R-MMU-264870">
    <property type="pathway name" value="Caspase-mediated cleavage of cytoskeletal proteins"/>
</dbReference>
<dbReference type="Reactome" id="R-MMU-352238">
    <property type="pathway name" value="Breakdown of the nuclear lamina"/>
</dbReference>
<dbReference type="BioGRID-ORCS" id="12368">
    <property type="hits" value="0 hits in 62 CRISPR screens"/>
</dbReference>
<dbReference type="ChiTaRS" id="Casp6">
    <property type="organism name" value="mouse"/>
</dbReference>
<dbReference type="PRO" id="PR:O08738"/>
<dbReference type="Proteomes" id="UP000000589">
    <property type="component" value="Chromosome 3"/>
</dbReference>
<dbReference type="RNAct" id="O08738">
    <property type="molecule type" value="protein"/>
</dbReference>
<dbReference type="Bgee" id="ENSMUSG00000027997">
    <property type="expression patterns" value="Expressed in small intestine Peyer's patch and 243 other cell types or tissues"/>
</dbReference>
<dbReference type="ExpressionAtlas" id="O08738">
    <property type="expression patterns" value="baseline and differential"/>
</dbReference>
<dbReference type="GO" id="GO:0005737">
    <property type="term" value="C:cytoplasm"/>
    <property type="evidence" value="ECO:0000250"/>
    <property type="project" value="UniProtKB"/>
</dbReference>
<dbReference type="GO" id="GO:0005829">
    <property type="term" value="C:cytosol"/>
    <property type="evidence" value="ECO:0007669"/>
    <property type="project" value="Ensembl"/>
</dbReference>
<dbReference type="GO" id="GO:0005654">
    <property type="term" value="C:nucleoplasm"/>
    <property type="evidence" value="ECO:0007669"/>
    <property type="project" value="Ensembl"/>
</dbReference>
<dbReference type="GO" id="GO:0005634">
    <property type="term" value="C:nucleus"/>
    <property type="evidence" value="ECO:0000250"/>
    <property type="project" value="UniProtKB"/>
</dbReference>
<dbReference type="GO" id="GO:0004197">
    <property type="term" value="F:cysteine-type endopeptidase activity"/>
    <property type="evidence" value="ECO:0000250"/>
    <property type="project" value="UniProtKB"/>
</dbReference>
<dbReference type="GO" id="GO:0004175">
    <property type="term" value="F:endopeptidase activity"/>
    <property type="evidence" value="ECO:0000314"/>
    <property type="project" value="MGI"/>
</dbReference>
<dbReference type="GO" id="GO:0042802">
    <property type="term" value="F:identical protein binding"/>
    <property type="evidence" value="ECO:0007669"/>
    <property type="project" value="Ensembl"/>
</dbReference>
<dbReference type="GO" id="GO:0002218">
    <property type="term" value="P:activation of innate immune response"/>
    <property type="evidence" value="ECO:0000250"/>
    <property type="project" value="UniProtKB"/>
</dbReference>
<dbReference type="GO" id="GO:0072734">
    <property type="term" value="P:cellular response to staurosporine"/>
    <property type="evidence" value="ECO:0007669"/>
    <property type="project" value="Ensembl"/>
</dbReference>
<dbReference type="GO" id="GO:0030855">
    <property type="term" value="P:epithelial cell differentiation"/>
    <property type="evidence" value="ECO:0007669"/>
    <property type="project" value="Ensembl"/>
</dbReference>
<dbReference type="GO" id="GO:0097284">
    <property type="term" value="P:hepatocyte apoptotic process"/>
    <property type="evidence" value="ECO:0000250"/>
    <property type="project" value="UniProtKB"/>
</dbReference>
<dbReference type="GO" id="GO:0072332">
    <property type="term" value="P:intrinsic apoptotic signaling pathway by p53 class mediator"/>
    <property type="evidence" value="ECO:0000250"/>
    <property type="project" value="UniProtKB"/>
</dbReference>
<dbReference type="GO" id="GO:0043065">
    <property type="term" value="P:positive regulation of apoptotic process"/>
    <property type="evidence" value="ECO:0000250"/>
    <property type="project" value="UniProtKB"/>
</dbReference>
<dbReference type="GO" id="GO:0060545">
    <property type="term" value="P:positive regulation of necroptotic process"/>
    <property type="evidence" value="ECO:0000250"/>
    <property type="project" value="UniProtKB"/>
</dbReference>
<dbReference type="GO" id="GO:0016540">
    <property type="term" value="P:protein autoprocessing"/>
    <property type="evidence" value="ECO:0000250"/>
    <property type="project" value="UniProtKB"/>
</dbReference>
<dbReference type="GO" id="GO:0070269">
    <property type="term" value="P:pyroptotic inflammatory response"/>
    <property type="evidence" value="ECO:0000250"/>
    <property type="project" value="UniProtKB"/>
</dbReference>
<dbReference type="CDD" id="cd00032">
    <property type="entry name" value="CASc"/>
    <property type="match status" value="1"/>
</dbReference>
<dbReference type="FunFam" id="3.40.50.1460:FF:000001">
    <property type="entry name" value="Caspase-3 preproprotein"/>
    <property type="match status" value="1"/>
</dbReference>
<dbReference type="Gene3D" id="3.40.50.1460">
    <property type="match status" value="1"/>
</dbReference>
<dbReference type="InterPro" id="IPR029030">
    <property type="entry name" value="Caspase-like_dom_sf"/>
</dbReference>
<dbReference type="InterPro" id="IPR033139">
    <property type="entry name" value="Caspase_cys_AS"/>
</dbReference>
<dbReference type="InterPro" id="IPR016129">
    <property type="entry name" value="Caspase_his_AS"/>
</dbReference>
<dbReference type="InterPro" id="IPR002398">
    <property type="entry name" value="Pept_C14"/>
</dbReference>
<dbReference type="InterPro" id="IPR011600">
    <property type="entry name" value="Pept_C14_caspase"/>
</dbReference>
<dbReference type="InterPro" id="IPR002138">
    <property type="entry name" value="Pept_C14_p10"/>
</dbReference>
<dbReference type="InterPro" id="IPR001309">
    <property type="entry name" value="Pept_C14_p20"/>
</dbReference>
<dbReference type="InterPro" id="IPR015917">
    <property type="entry name" value="Pept_C14A"/>
</dbReference>
<dbReference type="PANTHER" id="PTHR10454">
    <property type="entry name" value="CASPASE"/>
    <property type="match status" value="1"/>
</dbReference>
<dbReference type="PANTHER" id="PTHR10454:SF206">
    <property type="entry name" value="CASPASE-6"/>
    <property type="match status" value="1"/>
</dbReference>
<dbReference type="Pfam" id="PF00656">
    <property type="entry name" value="Peptidase_C14"/>
    <property type="match status" value="1"/>
</dbReference>
<dbReference type="PRINTS" id="PR00376">
    <property type="entry name" value="IL1BCENZYME"/>
</dbReference>
<dbReference type="SMART" id="SM00115">
    <property type="entry name" value="CASc"/>
    <property type="match status" value="1"/>
</dbReference>
<dbReference type="SUPFAM" id="SSF52129">
    <property type="entry name" value="Caspase-like"/>
    <property type="match status" value="1"/>
</dbReference>
<dbReference type="PROSITE" id="PS01122">
    <property type="entry name" value="CASPASE_CYS"/>
    <property type="match status" value="1"/>
</dbReference>
<dbReference type="PROSITE" id="PS01121">
    <property type="entry name" value="CASPASE_HIS"/>
    <property type="match status" value="1"/>
</dbReference>
<dbReference type="PROSITE" id="PS50207">
    <property type="entry name" value="CASPASE_P10"/>
    <property type="match status" value="1"/>
</dbReference>
<dbReference type="PROSITE" id="PS50208">
    <property type="entry name" value="CASPASE_P20"/>
    <property type="match status" value="1"/>
</dbReference>
<evidence type="ECO:0000250" key="1">
    <source>
        <dbReference type="UniProtKB" id="P55212"/>
    </source>
</evidence>
<evidence type="ECO:0000269" key="2">
    <source>
    </source>
</evidence>
<evidence type="ECO:0000269" key="3">
    <source>
    </source>
</evidence>
<evidence type="ECO:0000269" key="4">
    <source>
    </source>
</evidence>
<evidence type="ECO:0000269" key="5">
    <source>
    </source>
</evidence>
<evidence type="ECO:0000269" key="6">
    <source>
    </source>
</evidence>
<evidence type="ECO:0000269" key="7">
    <source>
    </source>
</evidence>
<evidence type="ECO:0000269" key="8">
    <source>
    </source>
</evidence>
<evidence type="ECO:0000269" key="9">
    <source>
    </source>
</evidence>
<evidence type="ECO:0000269" key="10">
    <source>
    </source>
</evidence>
<evidence type="ECO:0000303" key="11">
    <source>
    </source>
</evidence>
<evidence type="ECO:0000305" key="12"/>
<evidence type="ECO:0000305" key="13">
    <source>
    </source>
</evidence>
<evidence type="ECO:0000312" key="14">
    <source>
        <dbReference type="MGI" id="MGI:1312921"/>
    </source>
</evidence>
<evidence type="ECO:0007744" key="15">
    <source>
    </source>
</evidence>
<sequence>MTETDGFYKSREVFDPAEQYKMDHKRRGVALIFNHERFFWHLTLPERRGTNADRDNLTRRFSDLGFEVKCFNDLRAEELLLKIHEVSTSSHIDADCFICVFLSHGEGNHVYAYDAKIEIQTLTGLFKGDKCQSLVGKPKIFIIQACRGSQHDVPVVPLDMVDHQTDKLDNVTQVDAASVYTLPAGADFLMCYSVAEGYYSHRETVNGSWYIQDLCEMLARYGSSLEFTELLTLVNRKVSQRRVDFCKDPDAIGKKQVPCFASMLTKKLHFCPKPSK</sequence>
<organism>
    <name type="scientific">Mus musculus</name>
    <name type="common">Mouse</name>
    <dbReference type="NCBI Taxonomy" id="10090"/>
    <lineage>
        <taxon>Eukaryota</taxon>
        <taxon>Metazoa</taxon>
        <taxon>Chordata</taxon>
        <taxon>Craniata</taxon>
        <taxon>Vertebrata</taxon>
        <taxon>Euteleostomi</taxon>
        <taxon>Mammalia</taxon>
        <taxon>Eutheria</taxon>
        <taxon>Euarchontoglires</taxon>
        <taxon>Glires</taxon>
        <taxon>Rodentia</taxon>
        <taxon>Myomorpha</taxon>
        <taxon>Muroidea</taxon>
        <taxon>Muridae</taxon>
        <taxon>Murinae</taxon>
        <taxon>Mus</taxon>
        <taxon>Mus</taxon>
    </lineage>
</organism>
<protein>
    <recommendedName>
        <fullName evidence="11">Caspase-6</fullName>
        <shortName evidence="11">CASP-6</shortName>
        <ecNumber evidence="4 6">3.4.22.59</ecNumber>
    </recommendedName>
    <alternativeName>
        <fullName evidence="11">Apoptotic protease Mch-2</fullName>
    </alternativeName>
    <component>
        <recommendedName>
            <fullName evidence="1">Caspase-6 subunit p18</fullName>
        </recommendedName>
    </component>
    <component>
        <recommendedName>
            <fullName evidence="1">Caspase-6 subunit p11</fullName>
        </recommendedName>
    </component>
</protein>
<accession>O08738</accession>
<feature type="propeptide" id="PRO_0000004612" evidence="1">
    <location>
        <begin position="1"/>
        <end position="5"/>
    </location>
</feature>
<feature type="chain" id="PRO_0000004613" description="Caspase-6 subunit p18" evidence="1">
    <location>
        <begin position="6"/>
        <end position="162"/>
    </location>
</feature>
<feature type="propeptide" id="PRO_0000004614" evidence="1">
    <location>
        <begin position="163"/>
        <end position="175"/>
    </location>
</feature>
<feature type="chain" id="PRO_0000004615" description="Caspase-6 subunit p11" evidence="1">
    <location>
        <begin position="176"/>
        <end position="276"/>
    </location>
</feature>
<feature type="region of interest" description="Tri-arginine exosite" evidence="1">
    <location>
        <begin position="25"/>
        <end position="27"/>
    </location>
</feature>
<feature type="region of interest" description="130's region" evidence="1">
    <location>
        <begin position="108"/>
        <end position="125"/>
    </location>
</feature>
<feature type="active site" evidence="1">
    <location>
        <position position="104"/>
    </location>
</feature>
<feature type="active site" evidence="13">
    <location>
        <position position="146"/>
    </location>
</feature>
<feature type="modified residue" description="Phosphoserine" evidence="15">
    <location>
        <position position="62"/>
    </location>
</feature>
<feature type="modified residue" description="Phosphoserine" evidence="1">
    <location>
        <position position="239"/>
    </location>
</feature>
<feature type="lipid moiety-binding region" description="S-palmitoyl cysteine" evidence="1">
    <location>
        <position position="246"/>
    </location>
</feature>
<feature type="lipid moiety-binding region" description="S-palmitoyl cysteine" evidence="1">
    <location>
        <position position="259"/>
    </location>
</feature>
<feature type="mutagenesis site" description="Does not affect ability to promote ZBP1-mediated pyroptosis, apoptosis, and necroptosis (PANoptosis)." evidence="9">
    <original>C</original>
    <variation>A</variation>
    <location>
        <position position="146"/>
    </location>
</feature>
<proteinExistence type="evidence at protein level"/>